<sequence length="316" mass="34569">MNTILTCQDEYFAGGLGYDCPYFSSTSASTVDVSKETWVSLWASGLLDNRSSNHGPHTQGQLYNMGNSLQEDYLFGDQLSSQISANKQLQDTLLQKEEELSRLHEENNKLKEFLNSAFVKTLAEKTKKLLHQNGQSSFCTNPNSRVPFSSNSTPGSKAKRARRNLYGELTACEAQSSPVVEKWVLQTLGLKDVDTIDDSALANYSAMSLQPKQDSPSSGYSSAHLTPGHSQAATSCSLSPSQCSSASLPESETASPLSSPTYHTPDVAPNKTEVAFSTSLHPHCNVKTHSFPQGQAFVRRDTQGGWKFTWVPKQSE</sequence>
<name>GEMC1_XENLA</name>
<feature type="chain" id="PRO_0000395805" description="Geminin coiled-coil domain-containing protein 1">
    <location>
        <begin position="1"/>
        <end position="316"/>
    </location>
</feature>
<feature type="region of interest" description="Disordered" evidence="2">
    <location>
        <begin position="134"/>
        <end position="160"/>
    </location>
</feature>
<feature type="region of interest" description="Disordered" evidence="2">
    <location>
        <begin position="207"/>
        <end position="269"/>
    </location>
</feature>
<feature type="coiled-coil region" evidence="1">
    <location>
        <begin position="82"/>
        <end position="117"/>
    </location>
</feature>
<feature type="compositionally biased region" description="Polar residues" evidence="2">
    <location>
        <begin position="134"/>
        <end position="155"/>
    </location>
</feature>
<feature type="compositionally biased region" description="Polar residues" evidence="2">
    <location>
        <begin position="207"/>
        <end position="234"/>
    </location>
</feature>
<feature type="compositionally biased region" description="Low complexity" evidence="2">
    <location>
        <begin position="235"/>
        <end position="252"/>
    </location>
</feature>
<feature type="compositionally biased region" description="Polar residues" evidence="2">
    <location>
        <begin position="253"/>
        <end position="262"/>
    </location>
</feature>
<feature type="modified residue" description="Phosphothreonine; by cdk2" evidence="3">
    <location>
        <position position="153"/>
    </location>
</feature>
<feature type="mutagenesis site" description="Can still be phosphorylated by cdk2 in vitro. Abolishes phosphorylation by cdk2; when associated with A-177; A-215; A-226; A-239; A-255; A-259 and A-264." evidence="3">
    <original>T</original>
    <variation>A</variation>
    <location>
        <position position="153"/>
    </location>
</feature>
<feature type="mutagenesis site" description="Strongly reduces phosphorylation and interaction with cdk2 without affecting interaction with cdc45l." evidence="3">
    <original>RNL</original>
    <variation>ANA</variation>
    <location>
        <begin position="163"/>
        <end position="165"/>
    </location>
</feature>
<feature type="mutagenesis site" description="Abolishes phosphorylation by cdk2; when associated with A-153; A-215; A-226; A-239; A-255; A-259 and A-264." evidence="3">
    <original>S</original>
    <variation>A</variation>
    <location>
        <position position="177"/>
    </location>
</feature>
<feature type="mutagenesis site" description="Abolishes phosphorylation by cdk2; when associated with A-153; A-177; A-226; A-239; A-255; A-259 and A-264." evidence="3">
    <original>S</original>
    <variation>A</variation>
    <location>
        <position position="215"/>
    </location>
</feature>
<feature type="mutagenesis site" description="Abolishes phosphorylation by cdk2; when associated with A-153; A-177; A-215; A-239; A-255; A-259 and A-264." evidence="3">
    <original>T</original>
    <variation>A</variation>
    <location>
        <position position="226"/>
    </location>
</feature>
<feature type="mutagenesis site" description="Abolishes phosphorylation by cdk2; when associated with A-153; A-177; A-215; A-226; A-255; A-259 and A-264." evidence="3">
    <original>S</original>
    <variation>A</variation>
    <location>
        <position position="239"/>
    </location>
</feature>
<feature type="mutagenesis site" description="Abolishes phosphorylation by cdk2; when associated with A-153; A-177; A-215; A-226; A-239; A-259 and A-264." evidence="3">
    <original>S</original>
    <variation>A</variation>
    <location>
        <position position="255"/>
    </location>
</feature>
<feature type="mutagenesis site" description="Abolishes phosphorylation by cdk2; when associated with A-153; A-177; A-215; A-226; A-239; A-255 and A-264." evidence="3">
    <original>S</original>
    <variation>A</variation>
    <location>
        <position position="259"/>
    </location>
</feature>
<feature type="mutagenesis site" description="Abolishes phosphorylation by cdk2; when associated with A-153; A-177; A-215; A-226; A-239; A-255 and A-259." evidence="3">
    <original>T</original>
    <variation>A</variation>
    <location>
        <position position="264"/>
    </location>
</feature>
<protein>
    <recommendedName>
        <fullName>Geminin coiled-coil domain-containing protein 1</fullName>
        <shortName>xGEMC1</shortName>
    </recommendedName>
</protein>
<comment type="function">
    <text evidence="3">Regulator of DNA replication. Promotes initiation of chromosomal DNA replication by mediating topbp1- and cdk2-dependent recruitment of cdc45l onto replication origins.</text>
</comment>
<comment type="subunit">
    <text evidence="3">Interacts with topbp1. Interacts with Cdc45l and the kinase cdk2-cyclin-E (the interaction is direct).</text>
</comment>
<comment type="subcellular location">
    <subcellularLocation>
        <location evidence="3">Nucleus</location>
    </subcellularLocation>
    <text>Associates with chromatin during pre-replication complex (pre-RC) formation following interaction with topbp1.</text>
</comment>
<comment type="tissue specificity">
    <text evidence="3">Expressed in most tissues. Enriched in proliferating cells from skin and gut.</text>
</comment>
<comment type="PTM">
    <text evidence="3">Highly phosphorylated by cdk2; stimulates initiation of DNA replication.</text>
</comment>
<comment type="similarity">
    <text evidence="4">Belongs to the GEMC1 family.</text>
</comment>
<reference key="1">
    <citation type="journal article" date="2010" name="Nat. Cell Biol.">
        <title>GEMC1 is a TopBP1-interacting protein required for chromosomal DNA replication.</title>
        <authorList>
            <person name="Balestrini A."/>
            <person name="Cosentino C."/>
            <person name="Errico A."/>
            <person name="Garner E."/>
            <person name="Costanzo V."/>
        </authorList>
    </citation>
    <scope>NUCLEOTIDE SEQUENCE [MRNA]</scope>
    <scope>FUNCTION</scope>
    <scope>SUBCELLULAR LOCATION</scope>
    <scope>TISSUE SPECIFICITY</scope>
    <scope>INTERACTION WITH CDC45L; CDK2 AND TOPBP1</scope>
    <scope>MUTAGENESIS OF THR-153; 163-ARG--LEU-165; SER-177; SER-215; THR-226; SER-239; SER-255; SER-259 AND THR-264</scope>
    <scope>PHOSPHORYLATION AT THR-153</scope>
</reference>
<accession>D3YN49</accession>
<dbReference type="EMBL" id="GU594151">
    <property type="protein sequence ID" value="ADC92603.1"/>
    <property type="molecule type" value="mRNA"/>
</dbReference>
<dbReference type="RefSeq" id="NP_001166876.1">
    <property type="nucleotide sequence ID" value="NM_001173405.1"/>
</dbReference>
<dbReference type="SMR" id="D3YN49"/>
<dbReference type="iPTMnet" id="D3YN49"/>
<dbReference type="GeneID" id="100379535"/>
<dbReference type="KEGG" id="xla:100379535"/>
<dbReference type="AGR" id="Xenbase:XB-GENE-6465509"/>
<dbReference type="CTD" id="100379535"/>
<dbReference type="Xenbase" id="XB-GENE-6465509">
    <property type="gene designation" value="gmnc.S"/>
</dbReference>
<dbReference type="OrthoDB" id="8923917at2759"/>
<dbReference type="Proteomes" id="UP000186698">
    <property type="component" value="Chromosome 5S"/>
</dbReference>
<dbReference type="Bgee" id="100379535">
    <property type="expression patterns" value="Expressed in ovary and 4 other cell types or tissues"/>
</dbReference>
<dbReference type="GO" id="GO:0005634">
    <property type="term" value="C:nucleus"/>
    <property type="evidence" value="ECO:0000314"/>
    <property type="project" value="UniProtKB"/>
</dbReference>
<dbReference type="GO" id="GO:0003682">
    <property type="term" value="F:chromatin binding"/>
    <property type="evidence" value="ECO:0000314"/>
    <property type="project" value="UniProtKB"/>
</dbReference>
<dbReference type="GO" id="GO:0006270">
    <property type="term" value="P:DNA replication initiation"/>
    <property type="evidence" value="ECO:0000315"/>
    <property type="project" value="UniProtKB"/>
</dbReference>
<dbReference type="GO" id="GO:0045786">
    <property type="term" value="P:negative regulation of cell cycle"/>
    <property type="evidence" value="ECO:0000318"/>
    <property type="project" value="GO_Central"/>
</dbReference>
<dbReference type="GO" id="GO:0008156">
    <property type="term" value="P:negative regulation of DNA replication"/>
    <property type="evidence" value="ECO:0007669"/>
    <property type="project" value="TreeGrafter"/>
</dbReference>
<dbReference type="GO" id="GO:0030174">
    <property type="term" value="P:regulation of DNA-templated DNA replication initiation"/>
    <property type="evidence" value="ECO:0000318"/>
    <property type="project" value="GO_Central"/>
</dbReference>
<dbReference type="CDD" id="cd22588">
    <property type="entry name" value="GemC1_CC"/>
    <property type="match status" value="1"/>
</dbReference>
<dbReference type="PANTHER" id="PTHR13372">
    <property type="entry name" value="GEMININ"/>
    <property type="match status" value="1"/>
</dbReference>
<dbReference type="PANTHER" id="PTHR13372:SF2">
    <property type="entry name" value="GEMININ COILED-COIL DOMAIN-CONTAINING PROTEIN 1"/>
    <property type="match status" value="1"/>
</dbReference>
<keyword id="KW-0131">Cell cycle</keyword>
<keyword id="KW-0175">Coiled coil</keyword>
<keyword id="KW-0235">DNA replication</keyword>
<keyword id="KW-0539">Nucleus</keyword>
<keyword id="KW-0597">Phosphoprotein</keyword>
<keyword id="KW-1185">Reference proteome</keyword>
<gene>
    <name type="primary">gmnc</name>
    <name type="synonym">gemc1</name>
</gene>
<evidence type="ECO:0000255" key="1"/>
<evidence type="ECO:0000256" key="2">
    <source>
        <dbReference type="SAM" id="MobiDB-lite"/>
    </source>
</evidence>
<evidence type="ECO:0000269" key="3">
    <source>
    </source>
</evidence>
<evidence type="ECO:0000305" key="4"/>
<organism>
    <name type="scientific">Xenopus laevis</name>
    <name type="common">African clawed frog</name>
    <dbReference type="NCBI Taxonomy" id="8355"/>
    <lineage>
        <taxon>Eukaryota</taxon>
        <taxon>Metazoa</taxon>
        <taxon>Chordata</taxon>
        <taxon>Craniata</taxon>
        <taxon>Vertebrata</taxon>
        <taxon>Euteleostomi</taxon>
        <taxon>Amphibia</taxon>
        <taxon>Batrachia</taxon>
        <taxon>Anura</taxon>
        <taxon>Pipoidea</taxon>
        <taxon>Pipidae</taxon>
        <taxon>Xenopodinae</taxon>
        <taxon>Xenopus</taxon>
        <taxon>Xenopus</taxon>
    </lineage>
</organism>
<proteinExistence type="evidence at protein level"/>